<dbReference type="EMBL" id="AE017244">
    <property type="protein sequence ID" value="AAZ53556.2"/>
    <property type="molecule type" value="Genomic_DNA"/>
</dbReference>
<dbReference type="RefSeq" id="WP_041361589.1">
    <property type="nucleotide sequence ID" value="NC_007332.1"/>
</dbReference>
<dbReference type="SMR" id="Q4A8I3"/>
<dbReference type="KEGG" id="mhp:MHP7448_0182"/>
<dbReference type="HOGENOM" id="CLU_061015_2_1_14"/>
<dbReference type="Proteomes" id="UP000000553">
    <property type="component" value="Chromosome"/>
</dbReference>
<dbReference type="GO" id="GO:1990904">
    <property type="term" value="C:ribonucleoprotein complex"/>
    <property type="evidence" value="ECO:0007669"/>
    <property type="project" value="UniProtKB-KW"/>
</dbReference>
<dbReference type="GO" id="GO:0005840">
    <property type="term" value="C:ribosome"/>
    <property type="evidence" value="ECO:0007669"/>
    <property type="project" value="UniProtKB-KW"/>
</dbReference>
<dbReference type="GO" id="GO:0019843">
    <property type="term" value="F:rRNA binding"/>
    <property type="evidence" value="ECO:0007669"/>
    <property type="project" value="UniProtKB-UniRule"/>
</dbReference>
<dbReference type="GO" id="GO:0003735">
    <property type="term" value="F:structural constituent of ribosome"/>
    <property type="evidence" value="ECO:0007669"/>
    <property type="project" value="InterPro"/>
</dbReference>
<dbReference type="GO" id="GO:0000049">
    <property type="term" value="F:tRNA binding"/>
    <property type="evidence" value="ECO:0007669"/>
    <property type="project" value="UniProtKB-UniRule"/>
</dbReference>
<dbReference type="GO" id="GO:0006412">
    <property type="term" value="P:translation"/>
    <property type="evidence" value="ECO:0007669"/>
    <property type="project" value="UniProtKB-UniRule"/>
</dbReference>
<dbReference type="FunFam" id="3.30.1440.10:FF:000001">
    <property type="entry name" value="50S ribosomal protein L5"/>
    <property type="match status" value="1"/>
</dbReference>
<dbReference type="Gene3D" id="3.30.1440.10">
    <property type="match status" value="1"/>
</dbReference>
<dbReference type="HAMAP" id="MF_01333_B">
    <property type="entry name" value="Ribosomal_uL5_B"/>
    <property type="match status" value="1"/>
</dbReference>
<dbReference type="InterPro" id="IPR002132">
    <property type="entry name" value="Ribosomal_uL5"/>
</dbReference>
<dbReference type="InterPro" id="IPR020930">
    <property type="entry name" value="Ribosomal_uL5_bac-type"/>
</dbReference>
<dbReference type="InterPro" id="IPR031309">
    <property type="entry name" value="Ribosomal_uL5_C"/>
</dbReference>
<dbReference type="InterPro" id="IPR022803">
    <property type="entry name" value="Ribosomal_uL5_dom_sf"/>
</dbReference>
<dbReference type="InterPro" id="IPR031310">
    <property type="entry name" value="Ribosomal_uL5_N"/>
</dbReference>
<dbReference type="NCBIfam" id="NF000585">
    <property type="entry name" value="PRK00010.1"/>
    <property type="match status" value="1"/>
</dbReference>
<dbReference type="PANTHER" id="PTHR11994">
    <property type="entry name" value="60S RIBOSOMAL PROTEIN L11-RELATED"/>
    <property type="match status" value="1"/>
</dbReference>
<dbReference type="Pfam" id="PF00281">
    <property type="entry name" value="Ribosomal_L5"/>
    <property type="match status" value="1"/>
</dbReference>
<dbReference type="Pfam" id="PF00673">
    <property type="entry name" value="Ribosomal_L5_C"/>
    <property type="match status" value="1"/>
</dbReference>
<dbReference type="PIRSF" id="PIRSF002161">
    <property type="entry name" value="Ribosomal_L5"/>
    <property type="match status" value="1"/>
</dbReference>
<dbReference type="SUPFAM" id="SSF55282">
    <property type="entry name" value="RL5-like"/>
    <property type="match status" value="1"/>
</dbReference>
<keyword id="KW-0687">Ribonucleoprotein</keyword>
<keyword id="KW-0689">Ribosomal protein</keyword>
<keyword id="KW-0694">RNA-binding</keyword>
<keyword id="KW-0699">rRNA-binding</keyword>
<keyword id="KW-0820">tRNA-binding</keyword>
<accession>Q4A8I3</accession>
<sequence length="181" mass="20373">MIELEKHYYEKVFGQLKAHFNFKSPSQVPKITKVVVNMTAGNQSSNAKAIEAVLEDLAKITGQKAYKTVAKKSLATWKLRQGMPMGGKVTLRRQQMWNFLAKVLHIAIPRVRDFRGLSPKSFDGNGNFALGFKESIVFPEITFDKISKIRGLDVIIVTSARNDQEGFKLLELLGFPFAKKV</sequence>
<organism>
    <name type="scientific">Mesomycoplasma hyopneumoniae (strain 7448)</name>
    <name type="common">Mycoplasma hyopneumoniae</name>
    <dbReference type="NCBI Taxonomy" id="262722"/>
    <lineage>
        <taxon>Bacteria</taxon>
        <taxon>Bacillati</taxon>
        <taxon>Mycoplasmatota</taxon>
        <taxon>Mycoplasmoidales</taxon>
        <taxon>Metamycoplasmataceae</taxon>
        <taxon>Mesomycoplasma</taxon>
    </lineage>
</organism>
<reference key="1">
    <citation type="journal article" date="2005" name="J. Bacteriol.">
        <title>Swine and poultry pathogens: the complete genome sequences of two strains of Mycoplasma hyopneumoniae and a strain of Mycoplasma synoviae.</title>
        <authorList>
            <person name="Vasconcelos A.T.R."/>
            <person name="Ferreira H.B."/>
            <person name="Bizarro C.V."/>
            <person name="Bonatto S.L."/>
            <person name="Carvalho M.O."/>
            <person name="Pinto P.M."/>
            <person name="Almeida D.F."/>
            <person name="Almeida L.G.P."/>
            <person name="Almeida R."/>
            <person name="Alves-Junior L."/>
            <person name="Assuncao E.N."/>
            <person name="Azevedo V.A.C."/>
            <person name="Bogo M.R."/>
            <person name="Brigido M.M."/>
            <person name="Brocchi M."/>
            <person name="Burity H.A."/>
            <person name="Camargo A.A."/>
            <person name="Camargo S.S."/>
            <person name="Carepo M.S."/>
            <person name="Carraro D.M."/>
            <person name="de Mattos Cascardo J.C."/>
            <person name="Castro L.A."/>
            <person name="Cavalcanti G."/>
            <person name="Chemale G."/>
            <person name="Collevatti R.G."/>
            <person name="Cunha C.W."/>
            <person name="Dallagiovanna B."/>
            <person name="Dambros B.P."/>
            <person name="Dellagostin O.A."/>
            <person name="Falcao C."/>
            <person name="Fantinatti-Garboggini F."/>
            <person name="Felipe M.S.S."/>
            <person name="Fiorentin L."/>
            <person name="Franco G.R."/>
            <person name="Freitas N.S.A."/>
            <person name="Frias D."/>
            <person name="Grangeiro T.B."/>
            <person name="Grisard E.C."/>
            <person name="Guimaraes C.T."/>
            <person name="Hungria M."/>
            <person name="Jardim S.N."/>
            <person name="Krieger M.A."/>
            <person name="Laurino J.P."/>
            <person name="Lima L.F.A."/>
            <person name="Lopes M.I."/>
            <person name="Loreto E.L.S."/>
            <person name="Madeira H.M.F."/>
            <person name="Manfio G.P."/>
            <person name="Maranhao A.Q."/>
            <person name="Martinkovics C.T."/>
            <person name="Medeiros S.R.B."/>
            <person name="Moreira M.A.M."/>
            <person name="Neiva M."/>
            <person name="Ramalho-Neto C.E."/>
            <person name="Nicolas M.F."/>
            <person name="Oliveira S.C."/>
            <person name="Paixao R.F.C."/>
            <person name="Pedrosa F.O."/>
            <person name="Pena S.D.J."/>
            <person name="Pereira M."/>
            <person name="Pereira-Ferrari L."/>
            <person name="Piffer I."/>
            <person name="Pinto L.S."/>
            <person name="Potrich D.P."/>
            <person name="Salim A.C.M."/>
            <person name="Santos F.R."/>
            <person name="Schmitt R."/>
            <person name="Schneider M.P.C."/>
            <person name="Schrank A."/>
            <person name="Schrank I.S."/>
            <person name="Schuck A.F."/>
            <person name="Seuanez H.N."/>
            <person name="Silva D.W."/>
            <person name="Silva R."/>
            <person name="Silva S.C."/>
            <person name="Soares C.M.A."/>
            <person name="Souza K.R.L."/>
            <person name="Souza R.C."/>
            <person name="Staats C.C."/>
            <person name="Steffens M.B.R."/>
            <person name="Teixeira S.M.R."/>
            <person name="Urmenyi T.P."/>
            <person name="Vainstein M.H."/>
            <person name="Zuccherato L.W."/>
            <person name="Simpson A.J.G."/>
            <person name="Zaha A."/>
        </authorList>
    </citation>
    <scope>NUCLEOTIDE SEQUENCE [LARGE SCALE GENOMIC DNA]</scope>
    <source>
        <strain>7448</strain>
    </source>
</reference>
<protein>
    <recommendedName>
        <fullName evidence="1">Large ribosomal subunit protein uL5</fullName>
    </recommendedName>
    <alternativeName>
        <fullName evidence="2">50S ribosomal protein L5</fullName>
    </alternativeName>
</protein>
<evidence type="ECO:0000255" key="1">
    <source>
        <dbReference type="HAMAP-Rule" id="MF_01333"/>
    </source>
</evidence>
<evidence type="ECO:0000305" key="2"/>
<proteinExistence type="inferred from homology"/>
<comment type="function">
    <text evidence="1">This is one of the proteins that bind and probably mediate the attachment of the 5S RNA into the large ribosomal subunit, where it forms part of the central protuberance. In the 70S ribosome it contacts protein S13 of the 30S subunit (bridge B1b), connecting the 2 subunits; this bridge is implicated in subunit movement. Contacts the P site tRNA; the 5S rRNA and some of its associated proteins might help stabilize positioning of ribosome-bound tRNAs.</text>
</comment>
<comment type="subunit">
    <text evidence="1">Part of the 50S ribosomal subunit; part of the 5S rRNA/L5/L18/L25 subcomplex. Contacts the 5S rRNA and the P site tRNA. Forms a bridge to the 30S subunit in the 70S ribosome.</text>
</comment>
<comment type="similarity">
    <text evidence="1">Belongs to the universal ribosomal protein uL5 family.</text>
</comment>
<feature type="chain" id="PRO_0000243023" description="Large ribosomal subunit protein uL5">
    <location>
        <begin position="1"/>
        <end position="181"/>
    </location>
</feature>
<gene>
    <name evidence="1" type="primary">rplE</name>
    <name type="ordered locus">MHP7448_0182</name>
</gene>
<name>RL5_MESH7</name>